<feature type="chain" id="PRO_0000416186" description="ATP-dependent (S)-NAD(P)H-hydrate dehydratase">
    <location>
        <begin position="1"/>
        <end position="368"/>
    </location>
</feature>
<feature type="domain" description="YjeF C-terminal" evidence="1">
    <location>
        <begin position="13"/>
        <end position="357"/>
    </location>
</feature>
<feature type="binding site" evidence="1">
    <location>
        <position position="125"/>
    </location>
    <ligand>
        <name>(6S)-NADPHX</name>
        <dbReference type="ChEBI" id="CHEBI:64076"/>
    </ligand>
</feature>
<feature type="binding site" evidence="1">
    <location>
        <begin position="178"/>
        <end position="184"/>
    </location>
    <ligand>
        <name>(6S)-NADPHX</name>
        <dbReference type="ChEBI" id="CHEBI:64076"/>
    </ligand>
</feature>
<feature type="binding site" evidence="1">
    <location>
        <begin position="231"/>
        <end position="235"/>
    </location>
    <ligand>
        <name>ATP</name>
        <dbReference type="ChEBI" id="CHEBI:30616"/>
    </ligand>
</feature>
<feature type="binding site" evidence="1">
    <location>
        <begin position="250"/>
        <end position="259"/>
    </location>
    <ligand>
        <name>ATP</name>
        <dbReference type="ChEBI" id="CHEBI:30616"/>
    </ligand>
</feature>
<feature type="binding site" evidence="1">
    <location>
        <position position="260"/>
    </location>
    <ligand>
        <name>(6S)-NADPHX</name>
        <dbReference type="ChEBI" id="CHEBI:64076"/>
    </ligand>
</feature>
<reference key="1">
    <citation type="journal article" date="2005" name="Nature">
        <title>Genomic sequence of the pathogenic and allergenic filamentous fungus Aspergillus fumigatus.</title>
        <authorList>
            <person name="Nierman W.C."/>
            <person name="Pain A."/>
            <person name="Anderson M.J."/>
            <person name="Wortman J.R."/>
            <person name="Kim H.S."/>
            <person name="Arroyo J."/>
            <person name="Berriman M."/>
            <person name="Abe K."/>
            <person name="Archer D.B."/>
            <person name="Bermejo C."/>
            <person name="Bennett J.W."/>
            <person name="Bowyer P."/>
            <person name="Chen D."/>
            <person name="Collins M."/>
            <person name="Coulsen R."/>
            <person name="Davies R."/>
            <person name="Dyer P.S."/>
            <person name="Farman M.L."/>
            <person name="Fedorova N."/>
            <person name="Fedorova N.D."/>
            <person name="Feldblyum T.V."/>
            <person name="Fischer R."/>
            <person name="Fosker N."/>
            <person name="Fraser A."/>
            <person name="Garcia J.L."/>
            <person name="Garcia M.J."/>
            <person name="Goble A."/>
            <person name="Goldman G.H."/>
            <person name="Gomi K."/>
            <person name="Griffith-Jones S."/>
            <person name="Gwilliam R."/>
            <person name="Haas B.J."/>
            <person name="Haas H."/>
            <person name="Harris D.E."/>
            <person name="Horiuchi H."/>
            <person name="Huang J."/>
            <person name="Humphray S."/>
            <person name="Jimenez J."/>
            <person name="Keller N."/>
            <person name="Khouri H."/>
            <person name="Kitamoto K."/>
            <person name="Kobayashi T."/>
            <person name="Konzack S."/>
            <person name="Kulkarni R."/>
            <person name="Kumagai T."/>
            <person name="Lafton A."/>
            <person name="Latge J.-P."/>
            <person name="Li W."/>
            <person name="Lord A."/>
            <person name="Lu C."/>
            <person name="Majoros W.H."/>
            <person name="May G.S."/>
            <person name="Miller B.L."/>
            <person name="Mohamoud Y."/>
            <person name="Molina M."/>
            <person name="Monod M."/>
            <person name="Mouyna I."/>
            <person name="Mulligan S."/>
            <person name="Murphy L.D."/>
            <person name="O'Neil S."/>
            <person name="Paulsen I."/>
            <person name="Penalva M.A."/>
            <person name="Pertea M."/>
            <person name="Price C."/>
            <person name="Pritchard B.L."/>
            <person name="Quail M.A."/>
            <person name="Rabbinowitsch E."/>
            <person name="Rawlins N."/>
            <person name="Rajandream M.A."/>
            <person name="Reichard U."/>
            <person name="Renauld H."/>
            <person name="Robson G.D."/>
            <person name="Rodriguez de Cordoba S."/>
            <person name="Rodriguez-Pena J.M."/>
            <person name="Ronning C.M."/>
            <person name="Rutter S."/>
            <person name="Salzberg S.L."/>
            <person name="Sanchez M."/>
            <person name="Sanchez-Ferrero J.C."/>
            <person name="Saunders D."/>
            <person name="Seeger K."/>
            <person name="Squares R."/>
            <person name="Squares S."/>
            <person name="Takeuchi M."/>
            <person name="Tekaia F."/>
            <person name="Turner G."/>
            <person name="Vazquez de Aldana C.R."/>
            <person name="Weidman J."/>
            <person name="White O."/>
            <person name="Woodward J.R."/>
            <person name="Yu J.-H."/>
            <person name="Fraser C.M."/>
            <person name="Galagan J.E."/>
            <person name="Asai K."/>
            <person name="Machida M."/>
            <person name="Hall N."/>
            <person name="Barrell B.G."/>
            <person name="Denning D.W."/>
        </authorList>
    </citation>
    <scope>NUCLEOTIDE SEQUENCE [LARGE SCALE GENOMIC DNA]</scope>
    <source>
        <strain>ATCC MYA-4609 / CBS 101355 / FGSC A1100 / Af293</strain>
    </source>
</reference>
<organism>
    <name type="scientific">Aspergillus fumigatus (strain ATCC MYA-4609 / CBS 101355 / FGSC A1100 / Af293)</name>
    <name type="common">Neosartorya fumigata</name>
    <dbReference type="NCBI Taxonomy" id="330879"/>
    <lineage>
        <taxon>Eukaryota</taxon>
        <taxon>Fungi</taxon>
        <taxon>Dikarya</taxon>
        <taxon>Ascomycota</taxon>
        <taxon>Pezizomycotina</taxon>
        <taxon>Eurotiomycetes</taxon>
        <taxon>Eurotiomycetidae</taxon>
        <taxon>Eurotiales</taxon>
        <taxon>Aspergillaceae</taxon>
        <taxon>Aspergillus</taxon>
        <taxon>Aspergillus subgen. Fumigati</taxon>
    </lineage>
</organism>
<name>NNRD_ASPFU</name>
<proteinExistence type="inferred from homology"/>
<keyword id="KW-0067">ATP-binding</keyword>
<keyword id="KW-0963">Cytoplasm</keyword>
<keyword id="KW-0456">Lyase</keyword>
<keyword id="KW-0520">NAD</keyword>
<keyword id="KW-0521">NADP</keyword>
<keyword id="KW-0547">Nucleotide-binding</keyword>
<keyword id="KW-0597">Phosphoprotein</keyword>
<keyword id="KW-1185">Reference proteome</keyword>
<accession>Q4X1F8</accession>
<comment type="function">
    <text evidence="1">Catalyzes the dehydration of the S-form of NAD(P)HX at the expense of ATP, which is converted to ADP. Together with NAD(P)HX epimerase, which catalyzes the epimerization of the S- and R-forms, the enzyme allows the repair of both epimers of NAD(P)HX, a damaged form of NAD(P)H that is a result of enzymatic or heat-dependent hydration.</text>
</comment>
<comment type="catalytic activity">
    <reaction evidence="1">
        <text>(6S)-NADHX + ATP = ADP + phosphate + NADH + H(+)</text>
        <dbReference type="Rhea" id="RHEA:19017"/>
        <dbReference type="ChEBI" id="CHEBI:15378"/>
        <dbReference type="ChEBI" id="CHEBI:30616"/>
        <dbReference type="ChEBI" id="CHEBI:43474"/>
        <dbReference type="ChEBI" id="CHEBI:57945"/>
        <dbReference type="ChEBI" id="CHEBI:64074"/>
        <dbReference type="ChEBI" id="CHEBI:456216"/>
        <dbReference type="EC" id="4.2.1.93"/>
    </reaction>
</comment>
<comment type="catalytic activity">
    <reaction>
        <text>(6S)-NADPHX + ATP = ADP + phosphate + NADPH + H(+)</text>
        <dbReference type="Rhea" id="RHEA:32231"/>
        <dbReference type="ChEBI" id="CHEBI:15378"/>
        <dbReference type="ChEBI" id="CHEBI:30616"/>
        <dbReference type="ChEBI" id="CHEBI:43474"/>
        <dbReference type="ChEBI" id="CHEBI:57783"/>
        <dbReference type="ChEBI" id="CHEBI:64076"/>
        <dbReference type="ChEBI" id="CHEBI:456216"/>
        <dbReference type="EC" id="4.2.1.93"/>
    </reaction>
</comment>
<comment type="cofactor">
    <cofactor evidence="1">
        <name>Mg(2+)</name>
        <dbReference type="ChEBI" id="CHEBI:18420"/>
    </cofactor>
</comment>
<comment type="subcellular location">
    <subcellularLocation>
        <location evidence="1">Cytoplasm</location>
    </subcellularLocation>
</comment>
<comment type="similarity">
    <text evidence="1">Belongs to the NnrD/CARKD family.</text>
</comment>
<protein>
    <recommendedName>
        <fullName evidence="1">ATP-dependent (S)-NAD(P)H-hydrate dehydratase</fullName>
        <ecNumber evidence="1">4.2.1.93</ecNumber>
    </recommendedName>
    <alternativeName>
        <fullName evidence="1">ATP-dependent NAD(P)HX dehydratase</fullName>
    </alternativeName>
</protein>
<gene>
    <name type="ORF">AFUA_2G10120</name>
</gene>
<dbReference type="EC" id="4.2.1.93" evidence="1"/>
<dbReference type="EMBL" id="AAHF01000001">
    <property type="protein sequence ID" value="EAL93307.1"/>
    <property type="molecule type" value="Genomic_DNA"/>
</dbReference>
<dbReference type="RefSeq" id="XP_755345.1">
    <property type="nucleotide sequence ID" value="XM_750252.1"/>
</dbReference>
<dbReference type="SMR" id="Q4X1F8"/>
<dbReference type="FunCoup" id="Q4X1F8">
    <property type="interactions" value="150"/>
</dbReference>
<dbReference type="STRING" id="330879.Q4X1F8"/>
<dbReference type="EnsemblFungi" id="EAL93307">
    <property type="protein sequence ID" value="EAL93307"/>
    <property type="gene ID" value="AFUA_2G10120"/>
</dbReference>
<dbReference type="GeneID" id="3512934"/>
<dbReference type="KEGG" id="afm:AFUA_2G10120"/>
<dbReference type="eggNOG" id="KOG3974">
    <property type="taxonomic scope" value="Eukaryota"/>
</dbReference>
<dbReference type="HOGENOM" id="CLU_030651_0_0_1"/>
<dbReference type="InParanoid" id="Q4X1F8"/>
<dbReference type="OMA" id="WRAAYHN"/>
<dbReference type="OrthoDB" id="8110916at2759"/>
<dbReference type="Proteomes" id="UP000002530">
    <property type="component" value="Chromosome 2"/>
</dbReference>
<dbReference type="GO" id="GO:0005737">
    <property type="term" value="C:cytoplasm"/>
    <property type="evidence" value="ECO:0007669"/>
    <property type="project" value="UniProtKB-SubCell"/>
</dbReference>
<dbReference type="GO" id="GO:0005524">
    <property type="term" value="F:ATP binding"/>
    <property type="evidence" value="ECO:0007669"/>
    <property type="project" value="UniProtKB-KW"/>
</dbReference>
<dbReference type="GO" id="GO:0047453">
    <property type="term" value="F:ATP-dependent NAD(P)H-hydrate dehydratase activity"/>
    <property type="evidence" value="ECO:0000318"/>
    <property type="project" value="GO_Central"/>
</dbReference>
<dbReference type="GO" id="GO:0110051">
    <property type="term" value="P:metabolite repair"/>
    <property type="evidence" value="ECO:0000318"/>
    <property type="project" value="GO_Central"/>
</dbReference>
<dbReference type="GO" id="GO:0046496">
    <property type="term" value="P:nicotinamide nucleotide metabolic process"/>
    <property type="evidence" value="ECO:0007669"/>
    <property type="project" value="UniProtKB-UniRule"/>
</dbReference>
<dbReference type="CDD" id="cd01171">
    <property type="entry name" value="YXKO-related"/>
    <property type="match status" value="1"/>
</dbReference>
<dbReference type="FunFam" id="3.40.1190.20:FF:000043">
    <property type="entry name" value="ATP-dependent (S)-NAD(P)H-hydrate dehydratase"/>
    <property type="match status" value="1"/>
</dbReference>
<dbReference type="Gene3D" id="3.40.1190.20">
    <property type="match status" value="1"/>
</dbReference>
<dbReference type="HAMAP" id="MF_01965">
    <property type="entry name" value="NADHX_dehydratase"/>
    <property type="match status" value="1"/>
</dbReference>
<dbReference type="InterPro" id="IPR017953">
    <property type="entry name" value="Carbohydrate_kinase_pred_CS"/>
</dbReference>
<dbReference type="InterPro" id="IPR000631">
    <property type="entry name" value="CARKD"/>
</dbReference>
<dbReference type="InterPro" id="IPR029056">
    <property type="entry name" value="Ribokinase-like"/>
</dbReference>
<dbReference type="NCBIfam" id="TIGR00196">
    <property type="entry name" value="yjeF_cterm"/>
    <property type="match status" value="1"/>
</dbReference>
<dbReference type="PANTHER" id="PTHR12592:SF0">
    <property type="entry name" value="ATP-DEPENDENT (S)-NAD(P)H-HYDRATE DEHYDRATASE"/>
    <property type="match status" value="1"/>
</dbReference>
<dbReference type="PANTHER" id="PTHR12592">
    <property type="entry name" value="ATP-DEPENDENT (S)-NAD(P)H-HYDRATE DEHYDRATASE FAMILY MEMBER"/>
    <property type="match status" value="1"/>
</dbReference>
<dbReference type="Pfam" id="PF01256">
    <property type="entry name" value="Carb_kinase"/>
    <property type="match status" value="1"/>
</dbReference>
<dbReference type="SUPFAM" id="SSF53613">
    <property type="entry name" value="Ribokinase-like"/>
    <property type="match status" value="1"/>
</dbReference>
<dbReference type="PROSITE" id="PS01050">
    <property type="entry name" value="YJEF_C_2"/>
    <property type="match status" value="1"/>
</dbReference>
<dbReference type="PROSITE" id="PS51383">
    <property type="entry name" value="YJEF_C_3"/>
    <property type="match status" value="1"/>
</dbReference>
<sequence length="368" mass="39358">MEPVHVSTSSKVLFKKVRKIVPPLLEKFHKGQHGRVAVIGGSLDYTGAPYFSSMASARLGMSSNHVICEKSAATVIKSYSPNLMVHPLLPSTDSVSNPGSIDARALASPIVSMLSRLHALVIGPGLGRDGVTLKVVTEVMKEARSRSIPFVLDADGLLLVTEDPNLVKGYKDCILTPNVNEFSRLAKALGIEVPSQAQIAAQTDESDKTSKESQACEQLSQALGGVTIIQKGPHDVISNGVTTLISDLKGGLKRSGGQGDTLTGSLGTLLAWRAAYHNKSWDSGEQENPKEAQSKQDVLAELESENKRMSPATTLLLVAWAGSGITRECSRRAFNAKGRSLQASDLTDEVHESFLELIGEPEASRTHL</sequence>
<evidence type="ECO:0000255" key="1">
    <source>
        <dbReference type="HAMAP-Rule" id="MF_03157"/>
    </source>
</evidence>